<organism>
    <name type="scientific">Sus scrofa</name>
    <name type="common">Pig</name>
    <dbReference type="NCBI Taxonomy" id="9823"/>
    <lineage>
        <taxon>Eukaryota</taxon>
        <taxon>Metazoa</taxon>
        <taxon>Chordata</taxon>
        <taxon>Craniata</taxon>
        <taxon>Vertebrata</taxon>
        <taxon>Euteleostomi</taxon>
        <taxon>Mammalia</taxon>
        <taxon>Eutheria</taxon>
        <taxon>Laurasiatheria</taxon>
        <taxon>Artiodactyla</taxon>
        <taxon>Suina</taxon>
        <taxon>Suidae</taxon>
        <taxon>Sus</taxon>
    </lineage>
</organism>
<feature type="signal peptide" evidence="4">
    <location>
        <begin position="1"/>
        <end position="26"/>
    </location>
</feature>
<feature type="chain" id="PRO_0000014404" description="CCN family member 2">
    <location>
        <begin position="27"/>
        <end position="349"/>
    </location>
</feature>
<feature type="domain" description="IGFBP N-terminal" evidence="8">
    <location>
        <begin position="27"/>
        <end position="98"/>
    </location>
</feature>
<feature type="domain" description="VWFC" evidence="7">
    <location>
        <begin position="101"/>
        <end position="167"/>
    </location>
</feature>
<feature type="domain" description="TSP type-1" evidence="6">
    <location>
        <begin position="198"/>
        <end position="243"/>
    </location>
</feature>
<feature type="domain" description="CTCK" evidence="5">
    <location>
        <begin position="256"/>
        <end position="330"/>
    </location>
</feature>
<feature type="region of interest" description="Heparin-binding" evidence="3">
    <location>
        <begin position="247"/>
        <end position="349"/>
    </location>
</feature>
<feature type="disulfide bond" evidence="8">
    <location>
        <begin position="29"/>
        <end position="54"/>
    </location>
</feature>
<feature type="disulfide bond" evidence="8">
    <location>
        <begin position="33"/>
        <end position="56"/>
    </location>
</feature>
<feature type="disulfide bond" evidence="8">
    <location>
        <begin position="35"/>
        <end position="57"/>
    </location>
</feature>
<feature type="disulfide bond" evidence="8">
    <location>
        <begin position="43"/>
        <end position="60"/>
    </location>
</feature>
<feature type="disulfide bond" evidence="8">
    <location>
        <begin position="68"/>
        <end position="82"/>
    </location>
</feature>
<feature type="disulfide bond" evidence="8">
    <location>
        <begin position="74"/>
        <end position="95"/>
    </location>
</feature>
<feature type="disulfide bond" evidence="1">
    <location>
        <begin position="256"/>
        <end position="293"/>
    </location>
</feature>
<feature type="disulfide bond" evidence="1">
    <location>
        <begin position="273"/>
        <end position="307"/>
    </location>
</feature>
<feature type="disulfide bond" evidence="1">
    <location>
        <begin position="284"/>
        <end position="323"/>
    </location>
</feature>
<feature type="disulfide bond" evidence="1">
    <location>
        <begin position="287"/>
        <end position="325"/>
    </location>
</feature>
<feature type="disulfide bond" evidence="1">
    <location>
        <begin position="292"/>
        <end position="329"/>
    </location>
</feature>
<dbReference type="EMBL" id="U83916">
    <property type="protein sequence ID" value="AAC48756.1"/>
    <property type="molecule type" value="mRNA"/>
</dbReference>
<dbReference type="SMR" id="O19113"/>
<dbReference type="FunCoup" id="O19113">
    <property type="interactions" value="128"/>
</dbReference>
<dbReference type="STRING" id="9823.ENSSSCP00000037172"/>
<dbReference type="PaxDb" id="9823-ENSSSCP00000004525"/>
<dbReference type="eggNOG" id="ENOG502QQDX">
    <property type="taxonomic scope" value="Eukaryota"/>
</dbReference>
<dbReference type="InParanoid" id="O19113"/>
<dbReference type="Proteomes" id="UP000008227">
    <property type="component" value="Unplaced"/>
</dbReference>
<dbReference type="Proteomes" id="UP000314985">
    <property type="component" value="Unplaced"/>
</dbReference>
<dbReference type="Proteomes" id="UP000694570">
    <property type="component" value="Unplaced"/>
</dbReference>
<dbReference type="Proteomes" id="UP000694571">
    <property type="component" value="Unplaced"/>
</dbReference>
<dbReference type="Proteomes" id="UP000694720">
    <property type="component" value="Unplaced"/>
</dbReference>
<dbReference type="Proteomes" id="UP000694722">
    <property type="component" value="Unplaced"/>
</dbReference>
<dbReference type="Proteomes" id="UP000694723">
    <property type="component" value="Unplaced"/>
</dbReference>
<dbReference type="Proteomes" id="UP000694724">
    <property type="component" value="Unplaced"/>
</dbReference>
<dbReference type="Proteomes" id="UP000694725">
    <property type="component" value="Unplaced"/>
</dbReference>
<dbReference type="Proteomes" id="UP000694726">
    <property type="component" value="Unplaced"/>
</dbReference>
<dbReference type="Proteomes" id="UP000694727">
    <property type="component" value="Unplaced"/>
</dbReference>
<dbReference type="Proteomes" id="UP000694728">
    <property type="component" value="Unplaced"/>
</dbReference>
<dbReference type="GO" id="GO:0031012">
    <property type="term" value="C:extracellular matrix"/>
    <property type="evidence" value="ECO:0000318"/>
    <property type="project" value="GO_Central"/>
</dbReference>
<dbReference type="GO" id="GO:0005615">
    <property type="term" value="C:extracellular space"/>
    <property type="evidence" value="ECO:0000318"/>
    <property type="project" value="GO_Central"/>
</dbReference>
<dbReference type="GO" id="GO:0008201">
    <property type="term" value="F:heparin binding"/>
    <property type="evidence" value="ECO:0000318"/>
    <property type="project" value="GO_Central"/>
</dbReference>
<dbReference type="GO" id="GO:0005178">
    <property type="term" value="F:integrin binding"/>
    <property type="evidence" value="ECO:0000318"/>
    <property type="project" value="GO_Central"/>
</dbReference>
<dbReference type="GO" id="GO:0007155">
    <property type="term" value="P:cell adhesion"/>
    <property type="evidence" value="ECO:0000318"/>
    <property type="project" value="GO_Central"/>
</dbReference>
<dbReference type="GO" id="GO:0071897">
    <property type="term" value="P:DNA biosynthetic process"/>
    <property type="evidence" value="ECO:0007669"/>
    <property type="project" value="UniProtKB-KW"/>
</dbReference>
<dbReference type="GO" id="GO:0045597">
    <property type="term" value="P:positive regulation of cell differentiation"/>
    <property type="evidence" value="ECO:0000318"/>
    <property type="project" value="GO_Central"/>
</dbReference>
<dbReference type="GO" id="GO:0007165">
    <property type="term" value="P:signal transduction"/>
    <property type="evidence" value="ECO:0000318"/>
    <property type="project" value="GO_Central"/>
</dbReference>
<dbReference type="FunFam" id="2.20.100.10:FF:000036">
    <property type="entry name" value="Connective tissue growth factor (Predicted)"/>
    <property type="match status" value="1"/>
</dbReference>
<dbReference type="Gene3D" id="2.20.100.10">
    <property type="entry name" value="Thrombospondin type-1 (TSP1) repeat"/>
    <property type="match status" value="1"/>
</dbReference>
<dbReference type="InterPro" id="IPR050941">
    <property type="entry name" value="CCN"/>
</dbReference>
<dbReference type="InterPro" id="IPR006207">
    <property type="entry name" value="Cys_knot_C"/>
</dbReference>
<dbReference type="InterPro" id="IPR006208">
    <property type="entry name" value="Glyco_hormone_CN"/>
</dbReference>
<dbReference type="InterPro" id="IPR009030">
    <property type="entry name" value="Growth_fac_rcpt_cys_sf"/>
</dbReference>
<dbReference type="InterPro" id="IPR000867">
    <property type="entry name" value="IGFBP-like"/>
</dbReference>
<dbReference type="InterPro" id="IPR012395">
    <property type="entry name" value="IGFBP_CNN"/>
</dbReference>
<dbReference type="InterPro" id="IPR017891">
    <property type="entry name" value="Insulin_GF-bd_Cys-rich_CS"/>
</dbReference>
<dbReference type="InterPro" id="IPR043973">
    <property type="entry name" value="TSP1_CCN"/>
</dbReference>
<dbReference type="InterPro" id="IPR000884">
    <property type="entry name" value="TSP1_rpt"/>
</dbReference>
<dbReference type="InterPro" id="IPR036383">
    <property type="entry name" value="TSP1_rpt_sf"/>
</dbReference>
<dbReference type="InterPro" id="IPR001007">
    <property type="entry name" value="VWF_dom"/>
</dbReference>
<dbReference type="PANTHER" id="PTHR11348:SF7">
    <property type="entry name" value="CCN FAMILY MEMBER 2"/>
    <property type="match status" value="1"/>
</dbReference>
<dbReference type="PANTHER" id="PTHR11348">
    <property type="entry name" value="CONNECTIVE TISSUE GROWTH FACTOR-RELATED"/>
    <property type="match status" value="1"/>
</dbReference>
<dbReference type="Pfam" id="PF00007">
    <property type="entry name" value="Cys_knot"/>
    <property type="match status" value="1"/>
</dbReference>
<dbReference type="Pfam" id="PF00219">
    <property type="entry name" value="IGFBP"/>
    <property type="match status" value="1"/>
</dbReference>
<dbReference type="Pfam" id="PF19035">
    <property type="entry name" value="TSP1_CCN"/>
    <property type="match status" value="1"/>
</dbReference>
<dbReference type="Pfam" id="PF00093">
    <property type="entry name" value="VWC"/>
    <property type="match status" value="1"/>
</dbReference>
<dbReference type="PIRSF" id="PIRSF036495">
    <property type="entry name" value="IGFBP_rP_CNN"/>
    <property type="match status" value="1"/>
</dbReference>
<dbReference type="SMART" id="SM00041">
    <property type="entry name" value="CT"/>
    <property type="match status" value="1"/>
</dbReference>
<dbReference type="SMART" id="SM00121">
    <property type="entry name" value="IB"/>
    <property type="match status" value="1"/>
</dbReference>
<dbReference type="SMART" id="SM00209">
    <property type="entry name" value="TSP1"/>
    <property type="match status" value="1"/>
</dbReference>
<dbReference type="SMART" id="SM00214">
    <property type="entry name" value="VWC"/>
    <property type="match status" value="1"/>
</dbReference>
<dbReference type="SUPFAM" id="SSF57603">
    <property type="entry name" value="FnI-like domain"/>
    <property type="match status" value="1"/>
</dbReference>
<dbReference type="SUPFAM" id="SSF57184">
    <property type="entry name" value="Growth factor receptor domain"/>
    <property type="match status" value="1"/>
</dbReference>
<dbReference type="SUPFAM" id="SSF82895">
    <property type="entry name" value="TSP-1 type 1 repeat"/>
    <property type="match status" value="1"/>
</dbReference>
<dbReference type="PROSITE" id="PS01185">
    <property type="entry name" value="CTCK_1"/>
    <property type="match status" value="1"/>
</dbReference>
<dbReference type="PROSITE" id="PS01225">
    <property type="entry name" value="CTCK_2"/>
    <property type="match status" value="1"/>
</dbReference>
<dbReference type="PROSITE" id="PS00222">
    <property type="entry name" value="IGFBP_N_1"/>
    <property type="match status" value="1"/>
</dbReference>
<dbReference type="PROSITE" id="PS51323">
    <property type="entry name" value="IGFBP_N_2"/>
    <property type="match status" value="1"/>
</dbReference>
<dbReference type="PROSITE" id="PS50092">
    <property type="entry name" value="TSP1"/>
    <property type="match status" value="1"/>
</dbReference>
<dbReference type="PROSITE" id="PS01208">
    <property type="entry name" value="VWFC_1"/>
    <property type="match status" value="1"/>
</dbReference>
<dbReference type="PROSITE" id="PS50184">
    <property type="entry name" value="VWFC_2"/>
    <property type="match status" value="1"/>
</dbReference>
<name>CCN2_PIG</name>
<keyword id="KW-0130">Cell adhesion</keyword>
<keyword id="KW-1015">Disulfide bond</keyword>
<keyword id="KW-0237">DNA synthesis</keyword>
<keyword id="KW-0272">Extracellular matrix</keyword>
<keyword id="KW-0358">Heparin-binding</keyword>
<keyword id="KW-1185">Reference proteome</keyword>
<keyword id="KW-0964">Secreted</keyword>
<keyword id="KW-0732">Signal</keyword>
<comment type="function">
    <text evidence="3">Major connective tissue mitoattractant secreted by vascular endothelial cells. Promotes proliferation and differentiation of chondrocytes (By similarity). Is involved in the stimulation of osteoblast differentiation and has a critical role in osteogenesis (By similarity). Mediates heparin- and divalent cation-dependent cell adhesion in many cell types including fibroblasts, myofibroblasts, endothelial and epithelial cells (By similarity). Enhances fibroblast growth factor-induced DNA synthesis (By similarity).</text>
</comment>
<comment type="subunit">
    <text evidence="3">Monomer. Interacts with TSKU.</text>
</comment>
<comment type="subcellular location">
    <subcellularLocation>
        <location evidence="2">Secreted</location>
        <location evidence="2">Extracellular space</location>
        <location evidence="2">Extracellular matrix</location>
    </subcellularLocation>
    <subcellularLocation>
        <location evidence="2">Secreted</location>
    </subcellularLocation>
</comment>
<comment type="similarity">
    <text evidence="10">Belongs to the CCN family.</text>
</comment>
<gene>
    <name type="primary">CCN2</name>
    <name type="synonym">CTGF</name>
    <name evidence="9" type="synonym">HBGF-0.8</name>
</gene>
<protein>
    <recommendedName>
        <fullName>CCN family member 2</fullName>
    </recommendedName>
    <alternativeName>
        <fullName>Cellular communication network factor 2</fullName>
    </alternativeName>
    <alternativeName>
        <fullName>Connective tissue growth factor</fullName>
    </alternativeName>
</protein>
<accession>O19113</accession>
<evidence type="ECO:0000250" key="1"/>
<evidence type="ECO:0000250" key="2">
    <source>
        <dbReference type="UniProtKB" id="P29268"/>
    </source>
</evidence>
<evidence type="ECO:0000250" key="3">
    <source>
        <dbReference type="UniProtKB" id="P29279"/>
    </source>
</evidence>
<evidence type="ECO:0000255" key="4"/>
<evidence type="ECO:0000255" key="5">
    <source>
        <dbReference type="PROSITE-ProRule" id="PRU00039"/>
    </source>
</evidence>
<evidence type="ECO:0000255" key="6">
    <source>
        <dbReference type="PROSITE-ProRule" id="PRU00210"/>
    </source>
</evidence>
<evidence type="ECO:0000255" key="7">
    <source>
        <dbReference type="PROSITE-ProRule" id="PRU00220"/>
    </source>
</evidence>
<evidence type="ECO:0000255" key="8">
    <source>
        <dbReference type="PROSITE-ProRule" id="PRU00653"/>
    </source>
</evidence>
<evidence type="ECO:0000303" key="9">
    <source>
    </source>
</evidence>
<evidence type="ECO:0000305" key="10"/>
<reference key="1">
    <citation type="journal article" date="1997" name="J. Biol. Chem.">
        <title>Purification and characterization of novel heparin-binding growth factors in uterine secretory fluids. Identification as heparin-regulated Mr 10,000 forms of connective tissue growth factor.</title>
        <authorList>
            <person name="Brigstock D.R."/>
            <person name="Steffen C.L."/>
            <person name="Kim G.Y."/>
            <person name="Vegunta R.K."/>
            <person name="Diehl J.R."/>
            <person name="Harding P.A."/>
        </authorList>
    </citation>
    <scope>NUCLEOTIDE SEQUENCE [MRNA]</scope>
    <source>
        <tissue>Uterus</tissue>
    </source>
</reference>
<proteinExistence type="evidence at transcript level"/>
<sequence>MSATGLSPVRCAFVLLLALCSRPASGQDCSGQCQCAAGKRRACPAGVSLVLDGCGCCRLCAKQLGELCTERDPCDPHKGLFCDFGSPANRKIGVCTAKDGAPCVFGGTVYRSGESFQSSCKYQCTCLDGAVGCVPLCSMDVRLPSPDCPFPRRVKLPGKCCEEWVCDEPKDHTVVGPALAAYRLEDTFGPDPTMMRANCLVQTTEWSACSKTCGMGISTRVTNDNAFCRLEKQSRLCMVRPCEADLEENIKKGKKCIRTPKISKPVKFELSGCTSVKTYRAKFCGVCTDGRCCTPHRTTTLPVEFKCPDGEVMKKSMMFIKTCACHYNCPGDNDIFESLYYRKMYGDMA</sequence>